<gene>
    <name type="primary">cwf3</name>
    <name type="synonym">syf1</name>
    <name type="ORF">SPBC211.02c</name>
</gene>
<keyword id="KW-0002">3D-structure</keyword>
<keyword id="KW-0903">Direct protein sequencing</keyword>
<keyword id="KW-0507">mRNA processing</keyword>
<keyword id="KW-0508">mRNA splicing</keyword>
<keyword id="KW-0539">Nucleus</keyword>
<keyword id="KW-1185">Reference proteome</keyword>
<keyword id="KW-0677">Repeat</keyword>
<keyword id="KW-0747">Spliceosome</keyword>
<reference key="1">
    <citation type="journal article" date="1999" name="Mol. Cell. Biol.">
        <title>Myb-related fission yeast cdc5p is a component of a 40S snRNP-containing complex and is essential for pre-mRNA splicing.</title>
        <authorList>
            <person name="McDonald W.H."/>
            <person name="Ohi R."/>
            <person name="Smelkova N."/>
            <person name="Frendewey D."/>
            <person name="Gould K.L."/>
        </authorList>
    </citation>
    <scope>NUCLEOTIDE SEQUENCE [GENOMIC DNA]</scope>
    <scope>PROTEIN SEQUENCE OF 9-27; 460-475 AND 511-535</scope>
</reference>
<reference key="2">
    <citation type="journal article" date="2002" name="Nature">
        <title>The genome sequence of Schizosaccharomyces pombe.</title>
        <authorList>
            <person name="Wood V."/>
            <person name="Gwilliam R."/>
            <person name="Rajandream M.A."/>
            <person name="Lyne M.H."/>
            <person name="Lyne R."/>
            <person name="Stewart A."/>
            <person name="Sgouros J.G."/>
            <person name="Peat N."/>
            <person name="Hayles J."/>
            <person name="Baker S.G."/>
            <person name="Basham D."/>
            <person name="Bowman S."/>
            <person name="Brooks K."/>
            <person name="Brown D."/>
            <person name="Brown S."/>
            <person name="Chillingworth T."/>
            <person name="Churcher C.M."/>
            <person name="Collins M."/>
            <person name="Connor R."/>
            <person name="Cronin A."/>
            <person name="Davis P."/>
            <person name="Feltwell T."/>
            <person name="Fraser A."/>
            <person name="Gentles S."/>
            <person name="Goble A."/>
            <person name="Hamlin N."/>
            <person name="Harris D.E."/>
            <person name="Hidalgo J."/>
            <person name="Hodgson G."/>
            <person name="Holroyd S."/>
            <person name="Hornsby T."/>
            <person name="Howarth S."/>
            <person name="Huckle E.J."/>
            <person name="Hunt S."/>
            <person name="Jagels K."/>
            <person name="James K.D."/>
            <person name="Jones L."/>
            <person name="Jones M."/>
            <person name="Leather S."/>
            <person name="McDonald S."/>
            <person name="McLean J."/>
            <person name="Mooney P."/>
            <person name="Moule S."/>
            <person name="Mungall K.L."/>
            <person name="Murphy L.D."/>
            <person name="Niblett D."/>
            <person name="Odell C."/>
            <person name="Oliver K."/>
            <person name="O'Neil S."/>
            <person name="Pearson D."/>
            <person name="Quail M.A."/>
            <person name="Rabbinowitsch E."/>
            <person name="Rutherford K.M."/>
            <person name="Rutter S."/>
            <person name="Saunders D."/>
            <person name="Seeger K."/>
            <person name="Sharp S."/>
            <person name="Skelton J."/>
            <person name="Simmonds M.N."/>
            <person name="Squares R."/>
            <person name="Squares S."/>
            <person name="Stevens K."/>
            <person name="Taylor K."/>
            <person name="Taylor R.G."/>
            <person name="Tivey A."/>
            <person name="Walsh S.V."/>
            <person name="Warren T."/>
            <person name="Whitehead S."/>
            <person name="Woodward J.R."/>
            <person name="Volckaert G."/>
            <person name="Aert R."/>
            <person name="Robben J."/>
            <person name="Grymonprez B."/>
            <person name="Weltjens I."/>
            <person name="Vanstreels E."/>
            <person name="Rieger M."/>
            <person name="Schaefer M."/>
            <person name="Mueller-Auer S."/>
            <person name="Gabel C."/>
            <person name="Fuchs M."/>
            <person name="Duesterhoeft A."/>
            <person name="Fritzc C."/>
            <person name="Holzer E."/>
            <person name="Moestl D."/>
            <person name="Hilbert H."/>
            <person name="Borzym K."/>
            <person name="Langer I."/>
            <person name="Beck A."/>
            <person name="Lehrach H."/>
            <person name="Reinhardt R."/>
            <person name="Pohl T.M."/>
            <person name="Eger P."/>
            <person name="Zimmermann W."/>
            <person name="Wedler H."/>
            <person name="Wambutt R."/>
            <person name="Purnelle B."/>
            <person name="Goffeau A."/>
            <person name="Cadieu E."/>
            <person name="Dreano S."/>
            <person name="Gloux S."/>
            <person name="Lelaure V."/>
            <person name="Mottier S."/>
            <person name="Galibert F."/>
            <person name="Aves S.J."/>
            <person name="Xiang Z."/>
            <person name="Hunt C."/>
            <person name="Moore K."/>
            <person name="Hurst S.M."/>
            <person name="Lucas M."/>
            <person name="Rochet M."/>
            <person name="Gaillardin C."/>
            <person name="Tallada V.A."/>
            <person name="Garzon A."/>
            <person name="Thode G."/>
            <person name="Daga R.R."/>
            <person name="Cruzado L."/>
            <person name="Jimenez J."/>
            <person name="Sanchez M."/>
            <person name="del Rey F."/>
            <person name="Benito J."/>
            <person name="Dominguez A."/>
            <person name="Revuelta J.L."/>
            <person name="Moreno S."/>
            <person name="Armstrong J."/>
            <person name="Forsburg S.L."/>
            <person name="Cerutti L."/>
            <person name="Lowe T."/>
            <person name="McCombie W.R."/>
            <person name="Paulsen I."/>
            <person name="Potashkin J."/>
            <person name="Shpakovski G.V."/>
            <person name="Ussery D."/>
            <person name="Barrell B.G."/>
            <person name="Nurse P."/>
        </authorList>
    </citation>
    <scope>NUCLEOTIDE SEQUENCE [LARGE SCALE GENOMIC DNA]</scope>
    <source>
        <strain>972 / ATCC 24843</strain>
    </source>
</reference>
<reference key="3">
    <citation type="journal article" date="2002" name="Mol. Cell. Biol.">
        <title>Proteomics analysis reveals stable multiprotein complexes in both fission and budding yeasts containing Myb-related Cdc5p/Cef1p, novel pre-mRNA splicing factors, and snRNAs.</title>
        <authorList>
            <person name="Ohi M.D."/>
            <person name="Link A.J."/>
            <person name="Ren L."/>
            <person name="Jennings J.L."/>
            <person name="McDonald W.H."/>
            <person name="Gould K.L."/>
        </authorList>
    </citation>
    <scope>IDENTIFICATION IN THE CWF COMPLEX</scope>
    <scope>IDENTIFICATION BY MASS SPECTROMETRY</scope>
</reference>
<feature type="chain" id="PRO_0000205734" description="Pre-mRNA-splicing factor cwf3">
    <location>
        <begin position="1"/>
        <end position="790"/>
    </location>
</feature>
<feature type="repeat" description="HAT 1">
    <location>
        <begin position="12"/>
        <end position="44"/>
    </location>
</feature>
<feature type="repeat" description="HAT 2">
    <location>
        <begin position="45"/>
        <end position="77"/>
    </location>
</feature>
<feature type="repeat" description="HAT 3">
    <location>
        <begin position="89"/>
        <end position="121"/>
    </location>
</feature>
<feature type="repeat" description="HAT 4">
    <location>
        <begin position="123"/>
        <end position="157"/>
    </location>
</feature>
<feature type="repeat" description="HAT 5">
    <location>
        <begin position="159"/>
        <end position="190"/>
    </location>
</feature>
<feature type="repeat" description="HAT 6">
    <location>
        <begin position="193"/>
        <end position="228"/>
    </location>
</feature>
<feature type="repeat" description="HAT 7">
    <location>
        <begin position="233"/>
        <end position="266"/>
    </location>
</feature>
<feature type="repeat" description="HAT 8">
    <location>
        <begin position="268"/>
        <end position="303"/>
    </location>
</feature>
<feature type="repeat" description="HAT 9">
    <location>
        <begin position="331"/>
        <end position="364"/>
    </location>
</feature>
<feature type="repeat" description="HAT 10">
    <location>
        <begin position="368"/>
        <end position="402"/>
    </location>
</feature>
<feature type="repeat" description="HAT 11">
    <location>
        <begin position="404"/>
        <end position="440"/>
    </location>
</feature>
<feature type="repeat" description="HAT 12">
    <location>
        <begin position="457"/>
        <end position="492"/>
    </location>
</feature>
<feature type="repeat" description="HAT 13">
    <location>
        <begin position="494"/>
        <end position="526"/>
    </location>
</feature>
<feature type="repeat" description="HAT 14">
    <location>
        <begin position="528"/>
        <end position="562"/>
    </location>
</feature>
<feature type="repeat" description="HAT 15">
    <location>
        <begin position="567"/>
        <end position="601"/>
    </location>
</feature>
<feature type="repeat" description="HAT 16">
    <location>
        <begin position="639"/>
        <end position="673"/>
    </location>
</feature>
<feature type="repeat" description="HAT 17">
    <location>
        <begin position="675"/>
        <end position="709"/>
    </location>
</feature>
<feature type="region of interest" description="Disordered" evidence="2">
    <location>
        <begin position="769"/>
        <end position="790"/>
    </location>
</feature>
<feature type="compositionally biased region" description="Polar residues" evidence="2">
    <location>
        <begin position="775"/>
        <end position="790"/>
    </location>
</feature>
<feature type="helix" evidence="6">
    <location>
        <begin position="65"/>
        <end position="80"/>
    </location>
</feature>
<feature type="helix" evidence="6">
    <location>
        <begin position="89"/>
        <end position="101"/>
    </location>
</feature>
<feature type="helix" evidence="6">
    <location>
        <begin position="110"/>
        <end position="120"/>
    </location>
</feature>
<feature type="helix" evidence="6">
    <location>
        <begin position="128"/>
        <end position="137"/>
    </location>
</feature>
<feature type="helix" evidence="6">
    <location>
        <begin position="144"/>
        <end position="157"/>
    </location>
</feature>
<feature type="helix" evidence="6">
    <location>
        <begin position="163"/>
        <end position="169"/>
    </location>
</feature>
<feature type="helix" evidence="6">
    <location>
        <begin position="170"/>
        <end position="172"/>
    </location>
</feature>
<feature type="strand" evidence="6">
    <location>
        <begin position="175"/>
        <end position="177"/>
    </location>
</feature>
<feature type="helix" evidence="6">
    <location>
        <begin position="178"/>
        <end position="188"/>
    </location>
</feature>
<feature type="helix" evidence="6">
    <location>
        <begin position="191"/>
        <end position="202"/>
    </location>
</feature>
<feature type="helix" evidence="6">
    <location>
        <begin position="216"/>
        <end position="228"/>
    </location>
</feature>
<feature type="turn" evidence="6">
    <location>
        <begin position="230"/>
        <end position="232"/>
    </location>
</feature>
<feature type="helix" evidence="6">
    <location>
        <begin position="238"/>
        <end position="248"/>
    </location>
</feature>
<feature type="helix" evidence="6">
    <location>
        <begin position="253"/>
        <end position="267"/>
    </location>
</feature>
<feature type="helix" evidence="6">
    <location>
        <begin position="270"/>
        <end position="282"/>
    </location>
</feature>
<feature type="helix" evidence="6">
    <location>
        <begin position="288"/>
        <end position="310"/>
    </location>
</feature>
<feature type="helix" evidence="6">
    <location>
        <begin position="320"/>
        <end position="344"/>
    </location>
</feature>
<feature type="helix" evidence="6">
    <location>
        <begin position="352"/>
        <end position="361"/>
    </location>
</feature>
<feature type="turn" evidence="6">
    <location>
        <begin position="362"/>
        <end position="365"/>
    </location>
</feature>
<feature type="helix" evidence="6">
    <location>
        <begin position="368"/>
        <end position="379"/>
    </location>
</feature>
<feature type="helix" evidence="6">
    <location>
        <begin position="382"/>
        <end position="384"/>
    </location>
</feature>
<feature type="helix" evidence="6">
    <location>
        <begin position="391"/>
        <end position="402"/>
    </location>
</feature>
<feature type="helix" evidence="6">
    <location>
        <begin position="409"/>
        <end position="417"/>
    </location>
</feature>
<feature type="helix" evidence="6">
    <location>
        <begin position="426"/>
        <end position="439"/>
    </location>
</feature>
<feature type="helix" evidence="6">
    <location>
        <begin position="444"/>
        <end position="454"/>
    </location>
</feature>
<feature type="strand" evidence="6">
    <location>
        <begin position="465"/>
        <end position="470"/>
    </location>
</feature>
<feature type="turn" evidence="6">
    <location>
        <begin position="472"/>
        <end position="474"/>
    </location>
</feature>
<feature type="helix" evidence="6">
    <location>
        <begin position="480"/>
        <end position="493"/>
    </location>
</feature>
<feature type="helix" evidence="6">
    <location>
        <begin position="496"/>
        <end position="508"/>
    </location>
</feature>
<feature type="helix" evidence="6">
    <location>
        <begin position="514"/>
        <end position="525"/>
    </location>
</feature>
<feature type="turn" evidence="6">
    <location>
        <begin position="526"/>
        <end position="528"/>
    </location>
</feature>
<feature type="helix" evidence="6">
    <location>
        <begin position="531"/>
        <end position="543"/>
    </location>
</feature>
<feature type="helix" evidence="6">
    <location>
        <begin position="548"/>
        <end position="564"/>
    </location>
</feature>
<feature type="strand" evidence="6">
    <location>
        <begin position="565"/>
        <end position="568"/>
    </location>
</feature>
<feature type="helix" evidence="6">
    <location>
        <begin position="569"/>
        <end position="579"/>
    </location>
</feature>
<feature type="strand" evidence="6">
    <location>
        <begin position="580"/>
        <end position="582"/>
    </location>
</feature>
<feature type="turn" evidence="6">
    <location>
        <begin position="585"/>
        <end position="587"/>
    </location>
</feature>
<feature type="helix" evidence="6">
    <location>
        <begin position="588"/>
        <end position="602"/>
    </location>
</feature>
<feature type="helix" evidence="6">
    <location>
        <begin position="606"/>
        <end position="618"/>
    </location>
</feature>
<feature type="helix" evidence="6">
    <location>
        <begin position="621"/>
        <end position="623"/>
    </location>
</feature>
<feature type="helix" evidence="6">
    <location>
        <begin position="624"/>
        <end position="635"/>
    </location>
</feature>
<feature type="turn" evidence="6">
    <location>
        <begin position="636"/>
        <end position="639"/>
    </location>
</feature>
<feature type="helix" evidence="5">
    <location>
        <begin position="641"/>
        <end position="643"/>
    </location>
</feature>
<feature type="helix" evidence="6">
    <location>
        <begin position="644"/>
        <end position="654"/>
    </location>
</feature>
<feature type="helix" evidence="6">
    <location>
        <begin position="659"/>
        <end position="674"/>
    </location>
</feature>
<feature type="helix" evidence="6">
    <location>
        <begin position="678"/>
        <end position="687"/>
    </location>
</feature>
<feature type="turn" evidence="5">
    <location>
        <begin position="688"/>
        <end position="690"/>
    </location>
</feature>
<feature type="helix" evidence="6">
    <location>
        <begin position="697"/>
        <end position="709"/>
    </location>
</feature>
<feature type="turn" evidence="6">
    <location>
        <begin position="713"/>
        <end position="716"/>
    </location>
</feature>
<feature type="helix" evidence="6">
    <location>
        <begin position="717"/>
        <end position="733"/>
    </location>
</feature>
<protein>
    <recommendedName>
        <fullName>Pre-mRNA-splicing factor cwf3</fullName>
    </recommendedName>
    <alternativeName>
        <fullName>Complexed with cdc5 protein 3</fullName>
    </alternativeName>
</protein>
<name>SYF1_SCHPO</name>
<evidence type="ECO:0000250" key="1"/>
<evidence type="ECO:0000256" key="2">
    <source>
        <dbReference type="SAM" id="MobiDB-lite"/>
    </source>
</evidence>
<evidence type="ECO:0000269" key="3">
    <source>
    </source>
</evidence>
<evidence type="ECO:0000305" key="4"/>
<evidence type="ECO:0007829" key="5">
    <source>
        <dbReference type="PDB" id="9ESH"/>
    </source>
</evidence>
<evidence type="ECO:0007829" key="6">
    <source>
        <dbReference type="PDB" id="9ESI"/>
    </source>
</evidence>
<sequence length="790" mass="92637">MGDVIPLKVNFDLINVDDEPFELELLRDPYSLKSWLRYIKTHEGSTLEKRVLLFERACSELPGSYKIWKSYLELRVAHVEHLNPYFHAEAFASVNDCFERSLILLHKMPVIWKLYLQFLMKQPNVTKIRCTFNSALRALPVTQHDDIWDMFTKYAEDIGGLFCIHVYRRYIQVEPRAIENYIEILCKLGLWNEAARQYEDILNRPVFLSAKRKSNYQIWLEFSELVVQHPDHTQNIDVEKVFRAGIKRFSDQAGKLWTYLAQYYIRIGDYEKARSTFYEGMNNIMTVRNFTIIFDAFVEFEEQWLSARVEASSGNANDELSIDFHMAWLEKILDKRPLYINDVLLRQNINNVDEWLRRVKFLEDDSEKVVQVYTDAIKNVNPKLAHGSLGKLFSEFARFYENFDDLEQSRIIFEKATHVPYKTVNELAQVWIDWAEMELRHQNFDAARKLIGDAVHAPRKSHISFFDESLSPQVRLHKSSKIWMYYLDLEESVGTIETTRKLYDRVFELKIATPQVVVNYANLLEENAYFEDSFKIYERGVALFSYPVAFELWNLYLTKFVKRYQGTHMERTRDLFEQALEGCPPEFSKSIYLLYADFEEKFGKAKRSISILEKAADKVKTADRLAIYNVLLVKVALNYGVLATRTVYEKAIESLSDSEVKDMCLRFAEMETKLGEIDRARLIYIHGSQYCDPRVETDYWKAWQEFEIRYGNPEETVKEMLRIKRSVQTKFSTDSLHIAKRAAKIESAAAPMDPMEQLEMEKSEGPKALAGFVLSKSNPQETSKITGEEN</sequence>
<proteinExistence type="evidence at protein level"/>
<organism>
    <name type="scientific">Schizosaccharomyces pombe (strain 972 / ATCC 24843)</name>
    <name type="common">Fission yeast</name>
    <dbReference type="NCBI Taxonomy" id="284812"/>
    <lineage>
        <taxon>Eukaryota</taxon>
        <taxon>Fungi</taxon>
        <taxon>Dikarya</taxon>
        <taxon>Ascomycota</taxon>
        <taxon>Taphrinomycotina</taxon>
        <taxon>Schizosaccharomycetes</taxon>
        <taxon>Schizosaccharomycetales</taxon>
        <taxon>Schizosaccharomycetaceae</taxon>
        <taxon>Schizosaccharomyces</taxon>
    </lineage>
</organism>
<comment type="function">
    <text evidence="1">Involved in pre-mRNA splicing and cell cycle progression.</text>
</comment>
<comment type="subunit">
    <text evidence="3">Belongs to the 40S cdc5-associated complex (or cwf complex), a spliceosome sub-complex reminiscent of a late-stage spliceosome composed of the U2, U5 and U6 snRNAs and at least brr2, cdc5, cwf2/prp3, cwf3/syf1, cwf4/syf3, cwf5/ecm2, spp42/cwf6, cwf7/spf27, cwf8, cwf9, cwf10, cwf11, cwf12, prp45/cwf13, cwf14, cwf15, cwf16, cwf17, cwf18, cwf19, cwf20, cwf21, cwf22, cwf23, cwf24, cwf25, cwf26, cyp7/cwf27, cwf28, cwf29/ist3, lea1, msl1, prp5/cwf1, prp10, prp12/sap130, prp17, prp22, sap61, sap62, sap114, sap145, slu7, smb1, smd1, smd3, smf1, smg1 and syf2.</text>
</comment>
<comment type="interaction">
    <interactant intactId="EBI-538809">
        <id>Q9P7R9</id>
    </interactant>
    <interactant intactId="EBI-538771">
        <id>P39964</id>
        <label>cdc5</label>
    </interactant>
    <organismsDiffer>false</organismsDiffer>
    <experiments>7</experiments>
</comment>
<comment type="subcellular location">
    <subcellularLocation>
        <location evidence="1">Nucleus</location>
    </subcellularLocation>
</comment>
<comment type="similarity">
    <text evidence="4">Belongs to the crooked-neck family.</text>
</comment>
<dbReference type="EMBL" id="AF251149">
    <property type="protein sequence ID" value="AAG01400.1"/>
    <property type="molecule type" value="Genomic_DNA"/>
</dbReference>
<dbReference type="EMBL" id="CU329671">
    <property type="protein sequence ID" value="CAB75410.1"/>
    <property type="molecule type" value="Genomic_DNA"/>
</dbReference>
<dbReference type="PIR" id="T50337">
    <property type="entry name" value="T50337"/>
</dbReference>
<dbReference type="RefSeq" id="NP_596612.1">
    <property type="nucleotide sequence ID" value="NM_001022533.2"/>
</dbReference>
<dbReference type="PDB" id="3JB9">
    <property type="method" value="EM"/>
    <property type="resolution" value="3.60 A"/>
    <property type="chains" value="r=498-653"/>
</dbReference>
<dbReference type="PDB" id="9ESH">
    <property type="method" value="EM"/>
    <property type="resolution" value="3.20 A"/>
    <property type="chains" value="X=1-790"/>
</dbReference>
<dbReference type="PDB" id="9ESI">
    <property type="method" value="EM"/>
    <property type="resolution" value="3.10 A"/>
    <property type="chains" value="X=1-790"/>
</dbReference>
<dbReference type="PDBsum" id="3JB9"/>
<dbReference type="PDBsum" id="9ESH"/>
<dbReference type="PDBsum" id="9ESI"/>
<dbReference type="EMDB" id="EMD-19941"/>
<dbReference type="EMDB" id="EMD-19942"/>
<dbReference type="SMR" id="Q9P7R9"/>
<dbReference type="BioGRID" id="277274">
    <property type="interactions" value="29"/>
</dbReference>
<dbReference type="FunCoup" id="Q9P7R9">
    <property type="interactions" value="830"/>
</dbReference>
<dbReference type="IntAct" id="Q9P7R9">
    <property type="interactions" value="8"/>
</dbReference>
<dbReference type="STRING" id="284812.Q9P7R9"/>
<dbReference type="PaxDb" id="4896-SPBC211.02c.1"/>
<dbReference type="EnsemblFungi" id="SPBC211.02c.1">
    <property type="protein sequence ID" value="SPBC211.02c.1:pep"/>
    <property type="gene ID" value="SPBC211.02c"/>
</dbReference>
<dbReference type="GeneID" id="2540753"/>
<dbReference type="KEGG" id="spo:2540753"/>
<dbReference type="PomBase" id="SPBC211.02c">
    <property type="gene designation" value="cwf3"/>
</dbReference>
<dbReference type="VEuPathDB" id="FungiDB:SPBC211.02c"/>
<dbReference type="eggNOG" id="KOG2047">
    <property type="taxonomic scope" value="Eukaryota"/>
</dbReference>
<dbReference type="HOGENOM" id="CLU_007736_0_0_1"/>
<dbReference type="InParanoid" id="Q9P7R9"/>
<dbReference type="OMA" id="IWYNYLR"/>
<dbReference type="PhylomeDB" id="Q9P7R9"/>
<dbReference type="Reactome" id="R-SPO-6781823">
    <property type="pathway name" value="Formation of TC-NER Pre-Incision Complex"/>
</dbReference>
<dbReference type="Reactome" id="R-SPO-6782135">
    <property type="pathway name" value="Dual incision in TC-NER"/>
</dbReference>
<dbReference type="Reactome" id="R-SPO-6782210">
    <property type="pathway name" value="Gap-filling DNA repair synthesis and ligation in TC-NER"/>
</dbReference>
<dbReference type="Reactome" id="R-SPO-72163">
    <property type="pathway name" value="mRNA Splicing - Major Pathway"/>
</dbReference>
<dbReference type="PRO" id="PR:Q9P7R9"/>
<dbReference type="Proteomes" id="UP000002485">
    <property type="component" value="Chromosome II"/>
</dbReference>
<dbReference type="GO" id="GO:0005829">
    <property type="term" value="C:cytosol"/>
    <property type="evidence" value="ECO:0007005"/>
    <property type="project" value="PomBase"/>
</dbReference>
<dbReference type="GO" id="GO:0005634">
    <property type="term" value="C:nucleus"/>
    <property type="evidence" value="ECO:0007005"/>
    <property type="project" value="PomBase"/>
</dbReference>
<dbReference type="GO" id="GO:0071014">
    <property type="term" value="C:post-mRNA release spliceosomal complex"/>
    <property type="evidence" value="ECO:0000314"/>
    <property type="project" value="PomBase"/>
</dbReference>
<dbReference type="GO" id="GO:0000974">
    <property type="term" value="C:Prp19 complex"/>
    <property type="evidence" value="ECO:0000314"/>
    <property type="project" value="PomBase"/>
</dbReference>
<dbReference type="GO" id="GO:0005681">
    <property type="term" value="C:spliceosomal complex"/>
    <property type="evidence" value="ECO:0000314"/>
    <property type="project" value="PomBase"/>
</dbReference>
<dbReference type="GO" id="GO:0071007">
    <property type="term" value="C:U2-type catalytic step 2 spliceosome"/>
    <property type="evidence" value="ECO:0000318"/>
    <property type="project" value="GO_Central"/>
</dbReference>
<dbReference type="GO" id="GO:0071004">
    <property type="term" value="C:U2-type prespliceosome"/>
    <property type="evidence" value="ECO:0000266"/>
    <property type="project" value="PomBase"/>
</dbReference>
<dbReference type="GO" id="GO:0000349">
    <property type="term" value="P:generation of catalytic spliceosome for first transesterification step"/>
    <property type="evidence" value="ECO:0000318"/>
    <property type="project" value="GO_Central"/>
</dbReference>
<dbReference type="GO" id="GO:0045292">
    <property type="term" value="P:mRNA cis splicing, via spliceosome"/>
    <property type="evidence" value="ECO:0000269"/>
    <property type="project" value="PomBase"/>
</dbReference>
<dbReference type="GO" id="GO:0000398">
    <property type="term" value="P:mRNA splicing, via spliceosome"/>
    <property type="evidence" value="ECO:0000318"/>
    <property type="project" value="GO_Central"/>
</dbReference>
<dbReference type="FunFam" id="1.25.40.10:FF:000666">
    <property type="entry name" value="DNA repair and transcription protein (Xab2)"/>
    <property type="match status" value="1"/>
</dbReference>
<dbReference type="FunFam" id="1.25.40.10:FF:000023">
    <property type="entry name" value="Pre-mRNA-splicing factor SYF1"/>
    <property type="match status" value="1"/>
</dbReference>
<dbReference type="Gene3D" id="1.25.40.10">
    <property type="entry name" value="Tetratricopeptide repeat domain"/>
    <property type="match status" value="4"/>
</dbReference>
<dbReference type="InterPro" id="IPR003107">
    <property type="entry name" value="HAT"/>
</dbReference>
<dbReference type="InterPro" id="IPR055433">
    <property type="entry name" value="HAT_Syf1-like_N"/>
</dbReference>
<dbReference type="InterPro" id="IPR056350">
    <property type="entry name" value="HAT_Syf1_central"/>
</dbReference>
<dbReference type="InterPro" id="IPR055430">
    <property type="entry name" value="HAT_Syf1_CNRKL1_C"/>
</dbReference>
<dbReference type="InterPro" id="IPR045075">
    <property type="entry name" value="Syf1-like"/>
</dbReference>
<dbReference type="InterPro" id="IPR011990">
    <property type="entry name" value="TPR-like_helical_dom_sf"/>
</dbReference>
<dbReference type="PANTHER" id="PTHR11246">
    <property type="entry name" value="PRE-MRNA SPLICING FACTOR"/>
    <property type="match status" value="1"/>
</dbReference>
<dbReference type="PANTHER" id="PTHR11246:SF5">
    <property type="entry name" value="PRE-MRNA-SPLICING FACTOR SYF1"/>
    <property type="match status" value="1"/>
</dbReference>
<dbReference type="Pfam" id="PF23231">
    <property type="entry name" value="HAT_Syf1_CNRKL1_C"/>
    <property type="match status" value="1"/>
</dbReference>
<dbReference type="Pfam" id="PF23233">
    <property type="entry name" value="HAT_Syf1_CNRKL1_N"/>
    <property type="match status" value="1"/>
</dbReference>
<dbReference type="Pfam" id="PF23220">
    <property type="entry name" value="HAT_Syf1_M"/>
    <property type="match status" value="1"/>
</dbReference>
<dbReference type="SMART" id="SM00386">
    <property type="entry name" value="HAT"/>
    <property type="match status" value="13"/>
</dbReference>
<dbReference type="SUPFAM" id="SSF48452">
    <property type="entry name" value="TPR-like"/>
    <property type="match status" value="3"/>
</dbReference>
<accession>Q9P7R9</accession>